<keyword id="KW-0119">Carbohydrate metabolism</keyword>
<keyword id="KW-0413">Isomerase</keyword>
<name>DRDI_PETMO</name>
<dbReference type="EC" id="5.3.1.-" evidence="1"/>
<dbReference type="EMBL" id="CP000879">
    <property type="protein sequence ID" value="ABX31370.1"/>
    <property type="status" value="ALT_INIT"/>
    <property type="molecule type" value="Genomic_DNA"/>
</dbReference>
<dbReference type="SMR" id="A9BJF6"/>
<dbReference type="STRING" id="403833.Pmob_0639"/>
<dbReference type="KEGG" id="pmo:Pmob_0639"/>
<dbReference type="eggNOG" id="COG0182">
    <property type="taxonomic scope" value="Bacteria"/>
</dbReference>
<dbReference type="HOGENOM" id="CLU_016218_1_2_0"/>
<dbReference type="OrthoDB" id="9803436at2"/>
<dbReference type="Proteomes" id="UP000000789">
    <property type="component" value="Chromosome"/>
</dbReference>
<dbReference type="GO" id="GO:0046523">
    <property type="term" value="F:S-methyl-5-thioribose-1-phosphate isomerase activity"/>
    <property type="evidence" value="ECO:0007669"/>
    <property type="project" value="InterPro"/>
</dbReference>
<dbReference type="GO" id="GO:0019509">
    <property type="term" value="P:L-methionine salvage from methylthioadenosine"/>
    <property type="evidence" value="ECO:0007669"/>
    <property type="project" value="TreeGrafter"/>
</dbReference>
<dbReference type="GO" id="GO:0019323">
    <property type="term" value="P:pentose catabolic process"/>
    <property type="evidence" value="ECO:0007669"/>
    <property type="project" value="UniProtKB-UniRule"/>
</dbReference>
<dbReference type="FunFam" id="1.20.120.420:FF:000003">
    <property type="entry name" value="Methylthioribose-1-phosphate isomerase"/>
    <property type="match status" value="1"/>
</dbReference>
<dbReference type="FunFam" id="3.40.50.10470:FF:000006">
    <property type="entry name" value="Methylthioribose-1-phosphate isomerase"/>
    <property type="match status" value="1"/>
</dbReference>
<dbReference type="Gene3D" id="1.20.120.420">
    <property type="entry name" value="translation initiation factor eif-2b, domain 1"/>
    <property type="match status" value="1"/>
</dbReference>
<dbReference type="Gene3D" id="3.40.50.10470">
    <property type="entry name" value="Translation initiation factor eif-2b, domain 2"/>
    <property type="match status" value="1"/>
</dbReference>
<dbReference type="HAMAP" id="MF_02229">
    <property type="entry name" value="Deoxyribose1P_isomerase"/>
    <property type="match status" value="1"/>
</dbReference>
<dbReference type="HAMAP" id="MF_01678">
    <property type="entry name" value="Salvage_MtnA"/>
    <property type="match status" value="1"/>
</dbReference>
<dbReference type="InterPro" id="IPR043679">
    <property type="entry name" value="Deoxyribose1P_isomerase_DrdI"/>
</dbReference>
<dbReference type="InterPro" id="IPR000649">
    <property type="entry name" value="IF-2B-related"/>
</dbReference>
<dbReference type="InterPro" id="IPR005251">
    <property type="entry name" value="IF-M1Pi"/>
</dbReference>
<dbReference type="InterPro" id="IPR042529">
    <property type="entry name" value="IF_2B-like_C"/>
</dbReference>
<dbReference type="InterPro" id="IPR011559">
    <property type="entry name" value="Initiation_fac_2B_a/b/d"/>
</dbReference>
<dbReference type="InterPro" id="IPR027363">
    <property type="entry name" value="M1Pi_N"/>
</dbReference>
<dbReference type="InterPro" id="IPR037171">
    <property type="entry name" value="NagB/RpiA_transferase-like"/>
</dbReference>
<dbReference type="NCBIfam" id="TIGR00524">
    <property type="entry name" value="eIF-2B_rel"/>
    <property type="match status" value="1"/>
</dbReference>
<dbReference type="NCBIfam" id="NF004326">
    <property type="entry name" value="PRK05720.1"/>
    <property type="match status" value="1"/>
</dbReference>
<dbReference type="NCBIfam" id="TIGR00512">
    <property type="entry name" value="salvage_mtnA"/>
    <property type="match status" value="1"/>
</dbReference>
<dbReference type="PANTHER" id="PTHR43475">
    <property type="entry name" value="METHYLTHIORIBOSE-1-PHOSPHATE ISOMERASE"/>
    <property type="match status" value="1"/>
</dbReference>
<dbReference type="PANTHER" id="PTHR43475:SF1">
    <property type="entry name" value="METHYLTHIORIBOSE-1-PHOSPHATE ISOMERASE"/>
    <property type="match status" value="1"/>
</dbReference>
<dbReference type="Pfam" id="PF01008">
    <property type="entry name" value="IF-2B"/>
    <property type="match status" value="1"/>
</dbReference>
<dbReference type="SUPFAM" id="SSF100950">
    <property type="entry name" value="NagB/RpiA/CoA transferase-like"/>
    <property type="match status" value="1"/>
</dbReference>
<sequence length="347" mass="38270">MTVVPVKLNELKNKLVIIDQTLLPNEEKFLELDNPEEIWEAIKKLRVRGAPAIGIAAAFGLYVSTLKSKAANVAQFKKEFEEVRDYFATSRPTAVNLFWALKRMTRRFEQEEDKTVDKIKQALLDESEKIFAEDQEMSKAIGKHGLSLLKPGMGLLTHCNAGGLASSGYGTALAPIYLGHEKGYNFKVYADETRPLLQGARLTTYELYKAGIDVTLICDDMASLVMKEGKIDAVLVGCDRVAANGDTANKIGTSGLAVLAKEYGIPMYILGPTSTIDLDASTGEDIKIELRDEEEVVNGFGRRTALKGVKAYNPAFDVTDAKYITAIITEKGIVMQPYKESLKKLFE</sequence>
<proteinExistence type="inferred from homology"/>
<gene>
    <name evidence="1" type="primary">drdI</name>
    <name type="ordered locus">Pmob_0639</name>
</gene>
<feature type="chain" id="PRO_0000357218" description="5-deoxyribose 1-phosphate isomerase">
    <location>
        <begin position="1"/>
        <end position="347"/>
    </location>
</feature>
<feature type="active site" description="Proton donor" evidence="1">
    <location>
        <position position="239"/>
    </location>
</feature>
<feature type="binding site" evidence="1">
    <location>
        <begin position="48"/>
        <end position="50"/>
    </location>
    <ligand>
        <name>substrate</name>
    </ligand>
</feature>
<feature type="binding site" evidence="1">
    <location>
        <position position="91"/>
    </location>
    <ligand>
        <name>substrate</name>
    </ligand>
</feature>
<feature type="binding site" evidence="1">
    <location>
        <position position="198"/>
    </location>
    <ligand>
        <name>substrate</name>
    </ligand>
</feature>
<feature type="binding site" evidence="1">
    <location>
        <begin position="249"/>
        <end position="250"/>
    </location>
    <ligand>
        <name>substrate</name>
    </ligand>
</feature>
<feature type="site" description="Transition state stabilizer" evidence="1">
    <location>
        <position position="159"/>
    </location>
</feature>
<accession>A9BJF6</accession>
<protein>
    <recommendedName>
        <fullName evidence="1">5-deoxyribose 1-phosphate isomerase</fullName>
        <ecNumber evidence="1">5.3.1.-</ecNumber>
    </recommendedName>
</protein>
<evidence type="ECO:0000255" key="1">
    <source>
        <dbReference type="HAMAP-Rule" id="MF_02229"/>
    </source>
</evidence>
<evidence type="ECO:0000305" key="2"/>
<comment type="function">
    <text evidence="1">Catalyzes the isomerization of 5-deoxy-alpha-D-ribose 1-phosphate to 5-deoxy-D-ribulose 1-phosphate, as part of a 5-deoxyribose salvage pathway that recycles this toxic radical SAM enzyme by-product to mainstream metabolites.</text>
</comment>
<comment type="catalytic activity">
    <reaction evidence="1">
        <text>5-deoxy-alpha-D-ribose 1-phosphate = 5-deoxy-D-ribulose 1-phosphate</text>
        <dbReference type="Rhea" id="RHEA:61296"/>
        <dbReference type="ChEBI" id="CHEBI:58749"/>
        <dbReference type="ChEBI" id="CHEBI:144504"/>
    </reaction>
    <physiologicalReaction direction="left-to-right" evidence="1">
        <dbReference type="Rhea" id="RHEA:61297"/>
    </physiologicalReaction>
</comment>
<comment type="pathway">
    <text evidence="1">Carbohydrate degradation.</text>
</comment>
<comment type="similarity">
    <text evidence="1">Belongs to the EIF-2B alpha/beta/delta subunits family. DrdI subfamily.</text>
</comment>
<comment type="sequence caution" evidence="2">
    <conflict type="erroneous initiation">
        <sequence resource="EMBL-CDS" id="ABX31370"/>
    </conflict>
</comment>
<reference key="1">
    <citation type="submission" date="2007-11" db="EMBL/GenBank/DDBJ databases">
        <title>Complete sequence of Petroga mobilis SJ95.</title>
        <authorList>
            <consortium name="US DOE Joint Genome Institute"/>
            <person name="Copeland A."/>
            <person name="Lucas S."/>
            <person name="Lapidus A."/>
            <person name="Barry K."/>
            <person name="Glavina del Rio T."/>
            <person name="Dalin E."/>
            <person name="Tice H."/>
            <person name="Pitluck S."/>
            <person name="Meincke L."/>
            <person name="Brettin T."/>
            <person name="Bruce D."/>
            <person name="Detter J.C."/>
            <person name="Han C."/>
            <person name="Kuske C.R."/>
            <person name="Schmutz J."/>
            <person name="Larimer F."/>
            <person name="Land M."/>
            <person name="Hauser L."/>
            <person name="Kyrpides N."/>
            <person name="Mikhailova N."/>
            <person name="Noll K."/>
            <person name="Richardson P."/>
        </authorList>
    </citation>
    <scope>NUCLEOTIDE SEQUENCE [LARGE SCALE GENOMIC DNA]</scope>
    <source>
        <strain>DSM 10674 / SJ95</strain>
    </source>
</reference>
<organism>
    <name type="scientific">Petrotoga mobilis (strain DSM 10674 / SJ95)</name>
    <dbReference type="NCBI Taxonomy" id="403833"/>
    <lineage>
        <taxon>Bacteria</taxon>
        <taxon>Thermotogati</taxon>
        <taxon>Thermotogota</taxon>
        <taxon>Thermotogae</taxon>
        <taxon>Petrotogales</taxon>
        <taxon>Petrotogaceae</taxon>
        <taxon>Petrotoga</taxon>
    </lineage>
</organism>